<protein>
    <recommendedName>
        <fullName>DNA-directed RNA polymerases I, II, and III subunit RPABC1</fullName>
        <shortName>RNA polymerases I, II, and III subunit ABC1</shortName>
    </recommendedName>
    <alternativeName>
        <fullName>RPC24B</fullName>
    </alternativeName>
</protein>
<comment type="function">
    <text evidence="1">DNA-dependent RNA polymerase catalyzes the transcription of DNA into RNA using the four ribonucleoside triphosphates as substrates. Common component of RNA polymerases I, II and III which synthesize ribosomal RNA precursors, mRNA precursors and many functional non-coding RNAs, and small RNAs, such as 5S rRNA and tRNAs, respectively. Pol II is the central component of the basal RNA polymerase II transcription machinery. Pols are composed of mobile elements that move relative to each other. In Pol II, RPB5 is part of the lower jaw surrounding the central large cleft and thought to grab the incoming DNA template. Seems to be the major component in this process (By similarity).</text>
</comment>
<comment type="subunit">
    <text evidence="1">Component of the RNA polymerase I (Pol I), RNA polymerase II (Pol II) and RNA polymerase III (Pol III) complexes consisting of at least 14, 12 and 17 subunits, respectively.</text>
</comment>
<comment type="subcellular location">
    <subcellularLocation>
        <location evidence="1">Nucleus</location>
    </subcellularLocation>
</comment>
<comment type="similarity">
    <text evidence="3">Belongs to the archaeal Rpo5/eukaryotic RPB5 RNA polymerase subunit family.</text>
</comment>
<accession>Q09191</accession>
<reference key="1">
    <citation type="journal article" date="1997" name="Bioorg. Khim.">
        <title>Molecular cloning of rpb5+, rpb7+ and rpb11+ genes of the fission yeast Schizosaccharomyces pombe: completing primary structure of all indispensable subunits of its RNA polymerase II.</title>
        <authorList>
            <person name="Shpakovski G.V."/>
            <person name="Lebedenko E.N."/>
        </authorList>
    </citation>
    <scope>NUCLEOTIDE SEQUENCE [MRNA]</scope>
    <source>
        <strain>972 / ATCC 24843</strain>
    </source>
</reference>
<reference key="2">
    <citation type="journal article" date="1996" name="Genes Cells">
        <title>Molecular assembly of RNA polymerase II from the fission yeast Schizosaccharomyces pombe: subunit-subunit contact network involving Rpb5.</title>
        <authorList>
            <person name="Miyao T."/>
            <person name="Yasui K."/>
            <person name="Sakurai H."/>
            <person name="Yamagishi M."/>
            <person name="Ishihama A."/>
        </authorList>
    </citation>
    <scope>NUCLEOTIDE SEQUENCE [GENOMIC DNA]</scope>
    <scope>IDENTIFICATION IN THE RNA POLYMERASE II COMPLEX</scope>
    <source>
        <strain>972 / ATCC 24843</strain>
    </source>
</reference>
<reference key="3">
    <citation type="journal article" date="2002" name="Nature">
        <title>The genome sequence of Schizosaccharomyces pombe.</title>
        <authorList>
            <person name="Wood V."/>
            <person name="Gwilliam R."/>
            <person name="Rajandream M.A."/>
            <person name="Lyne M.H."/>
            <person name="Lyne R."/>
            <person name="Stewart A."/>
            <person name="Sgouros J.G."/>
            <person name="Peat N."/>
            <person name="Hayles J."/>
            <person name="Baker S.G."/>
            <person name="Basham D."/>
            <person name="Bowman S."/>
            <person name="Brooks K."/>
            <person name="Brown D."/>
            <person name="Brown S."/>
            <person name="Chillingworth T."/>
            <person name="Churcher C.M."/>
            <person name="Collins M."/>
            <person name="Connor R."/>
            <person name="Cronin A."/>
            <person name="Davis P."/>
            <person name="Feltwell T."/>
            <person name="Fraser A."/>
            <person name="Gentles S."/>
            <person name="Goble A."/>
            <person name="Hamlin N."/>
            <person name="Harris D.E."/>
            <person name="Hidalgo J."/>
            <person name="Hodgson G."/>
            <person name="Holroyd S."/>
            <person name="Hornsby T."/>
            <person name="Howarth S."/>
            <person name="Huckle E.J."/>
            <person name="Hunt S."/>
            <person name="Jagels K."/>
            <person name="James K.D."/>
            <person name="Jones L."/>
            <person name="Jones M."/>
            <person name="Leather S."/>
            <person name="McDonald S."/>
            <person name="McLean J."/>
            <person name="Mooney P."/>
            <person name="Moule S."/>
            <person name="Mungall K.L."/>
            <person name="Murphy L.D."/>
            <person name="Niblett D."/>
            <person name="Odell C."/>
            <person name="Oliver K."/>
            <person name="O'Neil S."/>
            <person name="Pearson D."/>
            <person name="Quail M.A."/>
            <person name="Rabbinowitsch E."/>
            <person name="Rutherford K.M."/>
            <person name="Rutter S."/>
            <person name="Saunders D."/>
            <person name="Seeger K."/>
            <person name="Sharp S."/>
            <person name="Skelton J."/>
            <person name="Simmonds M.N."/>
            <person name="Squares R."/>
            <person name="Squares S."/>
            <person name="Stevens K."/>
            <person name="Taylor K."/>
            <person name="Taylor R.G."/>
            <person name="Tivey A."/>
            <person name="Walsh S.V."/>
            <person name="Warren T."/>
            <person name="Whitehead S."/>
            <person name="Woodward J.R."/>
            <person name="Volckaert G."/>
            <person name="Aert R."/>
            <person name="Robben J."/>
            <person name="Grymonprez B."/>
            <person name="Weltjens I."/>
            <person name="Vanstreels E."/>
            <person name="Rieger M."/>
            <person name="Schaefer M."/>
            <person name="Mueller-Auer S."/>
            <person name="Gabel C."/>
            <person name="Fuchs M."/>
            <person name="Duesterhoeft A."/>
            <person name="Fritzc C."/>
            <person name="Holzer E."/>
            <person name="Moestl D."/>
            <person name="Hilbert H."/>
            <person name="Borzym K."/>
            <person name="Langer I."/>
            <person name="Beck A."/>
            <person name="Lehrach H."/>
            <person name="Reinhardt R."/>
            <person name="Pohl T.M."/>
            <person name="Eger P."/>
            <person name="Zimmermann W."/>
            <person name="Wedler H."/>
            <person name="Wambutt R."/>
            <person name="Purnelle B."/>
            <person name="Goffeau A."/>
            <person name="Cadieu E."/>
            <person name="Dreano S."/>
            <person name="Gloux S."/>
            <person name="Lelaure V."/>
            <person name="Mottier S."/>
            <person name="Galibert F."/>
            <person name="Aves S.J."/>
            <person name="Xiang Z."/>
            <person name="Hunt C."/>
            <person name="Moore K."/>
            <person name="Hurst S.M."/>
            <person name="Lucas M."/>
            <person name="Rochet M."/>
            <person name="Gaillardin C."/>
            <person name="Tallada V.A."/>
            <person name="Garzon A."/>
            <person name="Thode G."/>
            <person name="Daga R.R."/>
            <person name="Cruzado L."/>
            <person name="Jimenez J."/>
            <person name="Sanchez M."/>
            <person name="del Rey F."/>
            <person name="Benito J."/>
            <person name="Dominguez A."/>
            <person name="Revuelta J.L."/>
            <person name="Moreno S."/>
            <person name="Armstrong J."/>
            <person name="Forsburg S.L."/>
            <person name="Cerutti L."/>
            <person name="Lowe T."/>
            <person name="McCombie W.R."/>
            <person name="Paulsen I."/>
            <person name="Potashkin J."/>
            <person name="Shpakovski G.V."/>
            <person name="Ussery D."/>
            <person name="Barrell B.G."/>
            <person name="Nurse P."/>
        </authorList>
    </citation>
    <scope>NUCLEOTIDE SEQUENCE [LARGE SCALE GENOMIC DNA]</scope>
    <source>
        <strain>972 / ATCC 24843</strain>
    </source>
</reference>
<reference key="4">
    <citation type="journal article" date="2008" name="J. Proteome Res.">
        <title>Phosphoproteome analysis of fission yeast.</title>
        <authorList>
            <person name="Wilson-Grady J.T."/>
            <person name="Villen J."/>
            <person name="Gygi S.P."/>
        </authorList>
    </citation>
    <scope>PHOSPHORYLATION [LARGE SCALE ANALYSIS] AT SER-152</scope>
    <scope>IDENTIFICATION BY MASS SPECTROMETRY</scope>
</reference>
<name>RPAB1_SCHPO</name>
<dbReference type="EMBL" id="AF027820">
    <property type="protein sequence ID" value="AAB92515.1"/>
    <property type="molecule type" value="mRNA"/>
</dbReference>
<dbReference type="EMBL" id="D43785">
    <property type="protein sequence ID" value="BAA07843.1"/>
    <property type="molecule type" value="Genomic_DNA"/>
</dbReference>
<dbReference type="EMBL" id="CU329670">
    <property type="protein sequence ID" value="CAB16886.1"/>
    <property type="molecule type" value="Genomic_DNA"/>
</dbReference>
<dbReference type="PIR" id="T38270">
    <property type="entry name" value="T38270"/>
</dbReference>
<dbReference type="RefSeq" id="NP_593187.1">
    <property type="nucleotide sequence ID" value="NM_001018583.2"/>
</dbReference>
<dbReference type="PDB" id="3H0G">
    <property type="method" value="X-ray"/>
    <property type="resolution" value="3.65 A"/>
    <property type="chains" value="E/Q=1-210"/>
</dbReference>
<dbReference type="PDB" id="5U0S">
    <property type="method" value="EM"/>
    <property type="resolution" value="7.80 A"/>
    <property type="chains" value="e=1-210"/>
</dbReference>
<dbReference type="PDB" id="7AOC">
    <property type="method" value="EM"/>
    <property type="resolution" value="3.84 A"/>
    <property type="chains" value="E=1-210"/>
</dbReference>
<dbReference type="PDB" id="7AOD">
    <property type="method" value="EM"/>
    <property type="resolution" value="4.50 A"/>
    <property type="chains" value="E/Q=1-210"/>
</dbReference>
<dbReference type="PDB" id="7AOE">
    <property type="method" value="EM"/>
    <property type="resolution" value="3.90 A"/>
    <property type="chains" value="E=1-210"/>
</dbReference>
<dbReference type="PDB" id="8QSZ">
    <property type="method" value="EM"/>
    <property type="resolution" value="2.67 A"/>
    <property type="chains" value="E=1-210"/>
</dbReference>
<dbReference type="PDBsum" id="3H0G"/>
<dbReference type="PDBsum" id="5U0S"/>
<dbReference type="PDBsum" id="7AOC"/>
<dbReference type="PDBsum" id="7AOD"/>
<dbReference type="PDBsum" id="7AOE"/>
<dbReference type="PDBsum" id="8QSZ"/>
<dbReference type="EMDB" id="EMD-11840"/>
<dbReference type="EMDB" id="EMD-11841"/>
<dbReference type="EMDB" id="EMD-11842"/>
<dbReference type="EMDB" id="EMD-18643"/>
<dbReference type="EMDB" id="EMD-8480"/>
<dbReference type="SMR" id="Q09191"/>
<dbReference type="BioGRID" id="278400">
    <property type="interactions" value="26"/>
</dbReference>
<dbReference type="ComplexPortal" id="CPX-2661">
    <property type="entry name" value="DNA-directed RNA polymerase II complex"/>
</dbReference>
<dbReference type="ComplexPortal" id="CPX-8905">
    <property type="entry name" value="DNA-directed RNA polymerase III complex"/>
</dbReference>
<dbReference type="ComplexPortal" id="CPX-8907">
    <property type="entry name" value="DNA-directed RNA polymerase I complex"/>
</dbReference>
<dbReference type="FunCoup" id="Q09191">
    <property type="interactions" value="738"/>
</dbReference>
<dbReference type="IntAct" id="Q09191">
    <property type="interactions" value="2"/>
</dbReference>
<dbReference type="STRING" id="284812.Q09191"/>
<dbReference type="iPTMnet" id="Q09191"/>
<dbReference type="PaxDb" id="4896-SPAC23C4.15.1"/>
<dbReference type="EnsemblFungi" id="SPAC23C4.15.1">
    <property type="protein sequence ID" value="SPAC23C4.15.1:pep"/>
    <property type="gene ID" value="SPAC23C4.15"/>
</dbReference>
<dbReference type="GeneID" id="2541910"/>
<dbReference type="KEGG" id="spo:2541910"/>
<dbReference type="PomBase" id="SPAC23C4.15">
    <property type="gene designation" value="rpb5"/>
</dbReference>
<dbReference type="VEuPathDB" id="FungiDB:SPAC23C4.15"/>
<dbReference type="eggNOG" id="KOG3218">
    <property type="taxonomic scope" value="Eukaryota"/>
</dbReference>
<dbReference type="HOGENOM" id="CLU_058320_0_0_1"/>
<dbReference type="InParanoid" id="Q09191"/>
<dbReference type="OMA" id="VRDRGYF"/>
<dbReference type="PhylomeDB" id="Q09191"/>
<dbReference type="Reactome" id="R-SPO-113418">
    <property type="pathway name" value="Formation of the Early Elongation Complex"/>
</dbReference>
<dbReference type="Reactome" id="R-SPO-5578749">
    <property type="pathway name" value="Transcriptional regulation by small RNAs"/>
</dbReference>
<dbReference type="Reactome" id="R-SPO-674695">
    <property type="pathway name" value="RNA Polymerase II Pre-transcription Events"/>
</dbReference>
<dbReference type="Reactome" id="R-SPO-6781823">
    <property type="pathway name" value="Formation of TC-NER Pre-Incision Complex"/>
</dbReference>
<dbReference type="Reactome" id="R-SPO-6782135">
    <property type="pathway name" value="Dual incision in TC-NER"/>
</dbReference>
<dbReference type="Reactome" id="R-SPO-6782210">
    <property type="pathway name" value="Gap-filling DNA repair synthesis and ligation in TC-NER"/>
</dbReference>
<dbReference type="Reactome" id="R-SPO-6796648">
    <property type="pathway name" value="TP53 Regulates Transcription of DNA Repair Genes"/>
</dbReference>
<dbReference type="Reactome" id="R-SPO-6807505">
    <property type="pathway name" value="RNA polymerase II transcribes snRNA genes"/>
</dbReference>
<dbReference type="Reactome" id="R-SPO-72086">
    <property type="pathway name" value="mRNA Capping"/>
</dbReference>
<dbReference type="Reactome" id="R-SPO-72163">
    <property type="pathway name" value="mRNA Splicing - Major Pathway"/>
</dbReference>
<dbReference type="Reactome" id="R-SPO-72203">
    <property type="pathway name" value="Processing of Capped Intron-Containing Pre-mRNA"/>
</dbReference>
<dbReference type="Reactome" id="R-SPO-73762">
    <property type="pathway name" value="RNA Polymerase I Transcription Initiation"/>
</dbReference>
<dbReference type="Reactome" id="R-SPO-73772">
    <property type="pathway name" value="RNA Polymerase I Promoter Escape"/>
</dbReference>
<dbReference type="Reactome" id="R-SPO-73776">
    <property type="pathway name" value="RNA Polymerase II Promoter Escape"/>
</dbReference>
<dbReference type="Reactome" id="R-SPO-73779">
    <property type="pathway name" value="RNA Polymerase II Transcription Pre-Initiation And Promoter Opening"/>
</dbReference>
<dbReference type="Reactome" id="R-SPO-75953">
    <property type="pathway name" value="RNA Polymerase II Transcription Initiation"/>
</dbReference>
<dbReference type="Reactome" id="R-SPO-76042">
    <property type="pathway name" value="RNA Polymerase II Transcription Initiation And Promoter Clearance"/>
</dbReference>
<dbReference type="Reactome" id="R-SPO-76061">
    <property type="pathway name" value="RNA Polymerase III Transcription Initiation From Type 1 Promoter"/>
</dbReference>
<dbReference type="Reactome" id="R-SPO-76066">
    <property type="pathway name" value="RNA Polymerase III Transcription Initiation From Type 2 Promoter"/>
</dbReference>
<dbReference type="Reactome" id="R-SPO-77075">
    <property type="pathway name" value="RNA Pol II CTD phosphorylation and interaction with CE"/>
</dbReference>
<dbReference type="Reactome" id="R-SPO-9018519">
    <property type="pathway name" value="Estrogen-dependent gene expression"/>
</dbReference>
<dbReference type="EvolutionaryTrace" id="Q09191"/>
<dbReference type="PRO" id="PR:Q09191"/>
<dbReference type="Proteomes" id="UP000002485">
    <property type="component" value="Chromosome I"/>
</dbReference>
<dbReference type="GO" id="GO:0005829">
    <property type="term" value="C:cytosol"/>
    <property type="evidence" value="ECO:0007005"/>
    <property type="project" value="PomBase"/>
</dbReference>
<dbReference type="GO" id="GO:0005634">
    <property type="term" value="C:nucleus"/>
    <property type="evidence" value="ECO:0007005"/>
    <property type="project" value="PomBase"/>
</dbReference>
<dbReference type="GO" id="GO:0005736">
    <property type="term" value="C:RNA polymerase I complex"/>
    <property type="evidence" value="ECO:0000314"/>
    <property type="project" value="PomBase"/>
</dbReference>
<dbReference type="GO" id="GO:0005665">
    <property type="term" value="C:RNA polymerase II, core complex"/>
    <property type="evidence" value="ECO:0000314"/>
    <property type="project" value="PomBase"/>
</dbReference>
<dbReference type="GO" id="GO:0016591">
    <property type="term" value="C:RNA polymerase II, holoenzyme"/>
    <property type="evidence" value="ECO:0000269"/>
    <property type="project" value="PomBase"/>
</dbReference>
<dbReference type="GO" id="GO:0005666">
    <property type="term" value="C:RNA polymerase III complex"/>
    <property type="evidence" value="ECO:0000316"/>
    <property type="project" value="PomBase"/>
</dbReference>
<dbReference type="GO" id="GO:0003677">
    <property type="term" value="F:DNA binding"/>
    <property type="evidence" value="ECO:0007669"/>
    <property type="project" value="InterPro"/>
</dbReference>
<dbReference type="GO" id="GO:0003899">
    <property type="term" value="F:DNA-directed RNA polymerase activity"/>
    <property type="evidence" value="ECO:0007669"/>
    <property type="project" value="InterPro"/>
</dbReference>
<dbReference type="GO" id="GO:0006360">
    <property type="term" value="P:transcription by RNA polymerase I"/>
    <property type="evidence" value="ECO:0000316"/>
    <property type="project" value="PomBase"/>
</dbReference>
<dbReference type="GO" id="GO:0006366">
    <property type="term" value="P:transcription by RNA polymerase II"/>
    <property type="evidence" value="ECO:0000314"/>
    <property type="project" value="PomBase"/>
</dbReference>
<dbReference type="GO" id="GO:0006383">
    <property type="term" value="P:transcription by RNA polymerase III"/>
    <property type="evidence" value="ECO:0000316"/>
    <property type="project" value="PomBase"/>
</dbReference>
<dbReference type="GO" id="GO:0006362">
    <property type="term" value="P:transcription elongation by RNA polymerase I"/>
    <property type="evidence" value="ECO:0000269"/>
    <property type="project" value="PomBase"/>
</dbReference>
<dbReference type="GO" id="GO:0006367">
    <property type="term" value="P:transcription initiation at RNA polymerase II promoter"/>
    <property type="evidence" value="ECO:0000314"/>
    <property type="project" value="PomBase"/>
</dbReference>
<dbReference type="GO" id="GO:0042797">
    <property type="term" value="P:tRNA transcription by RNA polymerase III"/>
    <property type="evidence" value="ECO:0000318"/>
    <property type="project" value="GO_Central"/>
</dbReference>
<dbReference type="FunFam" id="3.40.1340.10:FF:000002">
    <property type="entry name" value="DNA-directed RNA polymerases I, II, and III subunit RPABC1"/>
    <property type="match status" value="1"/>
</dbReference>
<dbReference type="FunFam" id="3.90.940.20:FF:000001">
    <property type="entry name" value="DNA-directed RNA polymerases I, II, and III subunit RPABC1"/>
    <property type="match status" value="1"/>
</dbReference>
<dbReference type="Gene3D" id="3.40.1340.10">
    <property type="entry name" value="RNA polymerase, Rpb5, N-terminal domain"/>
    <property type="match status" value="1"/>
</dbReference>
<dbReference type="Gene3D" id="3.90.940.20">
    <property type="entry name" value="RPB5-like RNA polymerase subunit"/>
    <property type="match status" value="1"/>
</dbReference>
<dbReference type="HAMAP" id="MF_00025">
    <property type="entry name" value="RNApol_Rpo5_RPB5"/>
    <property type="match status" value="1"/>
</dbReference>
<dbReference type="InterPro" id="IPR014381">
    <property type="entry name" value="Arch_Rpo5/euc_Rpb5"/>
</dbReference>
<dbReference type="InterPro" id="IPR005571">
    <property type="entry name" value="RNA_pol_Rpb5_N"/>
</dbReference>
<dbReference type="InterPro" id="IPR036710">
    <property type="entry name" value="RNA_pol_Rpb5_N_sf"/>
</dbReference>
<dbReference type="InterPro" id="IPR000783">
    <property type="entry name" value="RNA_pol_subH/Rpb5_C"/>
</dbReference>
<dbReference type="InterPro" id="IPR020608">
    <property type="entry name" value="RNA_pol_subH/Rpb5_CS"/>
</dbReference>
<dbReference type="InterPro" id="IPR035913">
    <property type="entry name" value="RPB5-like_sf"/>
</dbReference>
<dbReference type="NCBIfam" id="NF007129">
    <property type="entry name" value="PRK09570.1"/>
    <property type="match status" value="1"/>
</dbReference>
<dbReference type="PANTHER" id="PTHR10535">
    <property type="entry name" value="DNA-DIRECTED RNA POLYMERASES I, II, AND III SUBUNIT RPABC1"/>
    <property type="match status" value="1"/>
</dbReference>
<dbReference type="PANTHER" id="PTHR10535:SF0">
    <property type="entry name" value="DNA-DIRECTED RNA POLYMERASES I, II, AND III SUBUNIT RPABC1"/>
    <property type="match status" value="1"/>
</dbReference>
<dbReference type="Pfam" id="PF01191">
    <property type="entry name" value="RNA_pol_Rpb5_C"/>
    <property type="match status" value="1"/>
</dbReference>
<dbReference type="Pfam" id="PF03871">
    <property type="entry name" value="RNA_pol_Rpb5_N"/>
    <property type="match status" value="1"/>
</dbReference>
<dbReference type="PIRSF" id="PIRSF000747">
    <property type="entry name" value="RPB5"/>
    <property type="match status" value="1"/>
</dbReference>
<dbReference type="SUPFAM" id="SSF53036">
    <property type="entry name" value="Eukaryotic RPB5 N-terminal domain"/>
    <property type="match status" value="1"/>
</dbReference>
<dbReference type="SUPFAM" id="SSF55287">
    <property type="entry name" value="RPB5-like RNA polymerase subunit"/>
    <property type="match status" value="1"/>
</dbReference>
<dbReference type="PROSITE" id="PS01110">
    <property type="entry name" value="RNA_POL_H_23KD"/>
    <property type="match status" value="1"/>
</dbReference>
<gene>
    <name type="primary">rpb5</name>
    <name type="ORF">SPAC23C4.15</name>
</gene>
<feature type="chain" id="PRO_0000146084" description="DNA-directed RNA polymerases I, II, and III subunit RPABC1">
    <location>
        <begin position="1"/>
        <end position="210"/>
    </location>
</feature>
<feature type="modified residue" description="Phosphoserine" evidence="2">
    <location>
        <position position="152"/>
    </location>
</feature>
<feature type="helix" evidence="4">
    <location>
        <begin position="5"/>
        <end position="25"/>
    </location>
</feature>
<feature type="helix" evidence="4">
    <location>
        <begin position="31"/>
        <end position="34"/>
    </location>
</feature>
<feature type="helix" evidence="4">
    <location>
        <begin position="38"/>
        <end position="45"/>
    </location>
</feature>
<feature type="helix" evidence="4">
    <location>
        <begin position="54"/>
        <end position="57"/>
    </location>
</feature>
<feature type="strand" evidence="4">
    <location>
        <begin position="59"/>
        <end position="61"/>
    </location>
</feature>
<feature type="strand" evidence="4">
    <location>
        <begin position="63"/>
        <end position="65"/>
    </location>
</feature>
<feature type="strand" evidence="4">
    <location>
        <begin position="72"/>
        <end position="76"/>
    </location>
</feature>
<feature type="strand" evidence="4">
    <location>
        <begin position="78"/>
        <end position="82"/>
    </location>
</feature>
<feature type="helix" evidence="4">
    <location>
        <begin position="84"/>
        <end position="97"/>
    </location>
</feature>
<feature type="strand" evidence="4">
    <location>
        <begin position="100"/>
        <end position="108"/>
    </location>
</feature>
<feature type="helix" evidence="4">
    <location>
        <begin position="112"/>
        <end position="120"/>
    </location>
</feature>
<feature type="turn" evidence="4">
    <location>
        <begin position="121"/>
        <end position="124"/>
    </location>
</feature>
<feature type="strand" evidence="4">
    <location>
        <begin position="126"/>
        <end position="131"/>
    </location>
</feature>
<feature type="helix" evidence="4">
    <location>
        <begin position="133"/>
        <end position="136"/>
    </location>
</feature>
<feature type="helix" evidence="4">
    <location>
        <begin position="139"/>
        <end position="141"/>
    </location>
</feature>
<feature type="strand" evidence="4">
    <location>
        <begin position="142"/>
        <end position="145"/>
    </location>
</feature>
<feature type="strand" evidence="4">
    <location>
        <begin position="147"/>
        <end position="150"/>
    </location>
</feature>
<feature type="helix" evidence="4">
    <location>
        <begin position="153"/>
        <end position="163"/>
    </location>
</feature>
<feature type="helix" evidence="4">
    <location>
        <begin position="167"/>
        <end position="169"/>
    </location>
</feature>
<feature type="strand" evidence="4">
    <location>
        <begin position="172"/>
        <end position="174"/>
    </location>
</feature>
<feature type="helix" evidence="4">
    <location>
        <begin position="178"/>
        <end position="183"/>
    </location>
</feature>
<feature type="strand" evidence="4">
    <location>
        <begin position="190"/>
        <end position="197"/>
    </location>
</feature>
<feature type="turn" evidence="4">
    <location>
        <begin position="198"/>
        <end position="200"/>
    </location>
</feature>
<feature type="strand" evidence="4">
    <location>
        <begin position="201"/>
        <end position="210"/>
    </location>
</feature>
<evidence type="ECO:0000250" key="1"/>
<evidence type="ECO:0000269" key="2">
    <source>
    </source>
</evidence>
<evidence type="ECO:0000305" key="3"/>
<evidence type="ECO:0007829" key="4">
    <source>
        <dbReference type="PDB" id="8QSZ"/>
    </source>
</evidence>
<keyword id="KW-0002">3D-structure</keyword>
<keyword id="KW-0240">DNA-directed RNA polymerase</keyword>
<keyword id="KW-0539">Nucleus</keyword>
<keyword id="KW-0597">Phosphoprotein</keyword>
<keyword id="KW-1185">Reference proteome</keyword>
<keyword id="KW-0804">Transcription</keyword>
<proteinExistence type="evidence at protein level"/>
<organism>
    <name type="scientific">Schizosaccharomyces pombe (strain 972 / ATCC 24843)</name>
    <name type="common">Fission yeast</name>
    <dbReference type="NCBI Taxonomy" id="284812"/>
    <lineage>
        <taxon>Eukaryota</taxon>
        <taxon>Fungi</taxon>
        <taxon>Dikarya</taxon>
        <taxon>Ascomycota</taxon>
        <taxon>Taphrinomycotina</taxon>
        <taxon>Schizosaccharomycetes</taxon>
        <taxon>Schizosaccharomycetales</taxon>
        <taxon>Schizosaccharomycetaceae</taxon>
        <taxon>Schizosaccharomyces</taxon>
    </lineage>
</organism>
<sequence length="210" mass="23915">MSAEEKNIVRVFRAWKTAHQLVHDRGYGVSQAELDLTLDQFKAMHCGMGRNLDRTTLSFYAKPSNDSNKGTIYIEFAKEPSVGIKEMRTFVHTLGDHNHKTGILIYANSMTPSAAKIIATVTGQFTIETFQESDLIVNITHHELVPKHILLSPDEKKELLDRYKLRETQLPRIQLADPVARYLGLKRGEVVKIVRRSETSGRYNSYRICA</sequence>